<proteinExistence type="inferred from homology"/>
<reference key="1">
    <citation type="journal article" date="2001" name="Proc. Natl. Acad. Sci. U.S.A.">
        <title>Complete genome sequence of Caulobacter crescentus.</title>
        <authorList>
            <person name="Nierman W.C."/>
            <person name="Feldblyum T.V."/>
            <person name="Laub M.T."/>
            <person name="Paulsen I.T."/>
            <person name="Nelson K.E."/>
            <person name="Eisen J.A."/>
            <person name="Heidelberg J.F."/>
            <person name="Alley M.R.K."/>
            <person name="Ohta N."/>
            <person name="Maddock J.R."/>
            <person name="Potocka I."/>
            <person name="Nelson W.C."/>
            <person name="Newton A."/>
            <person name="Stephens C."/>
            <person name="Phadke N.D."/>
            <person name="Ely B."/>
            <person name="DeBoy R.T."/>
            <person name="Dodson R.J."/>
            <person name="Durkin A.S."/>
            <person name="Gwinn M.L."/>
            <person name="Haft D.H."/>
            <person name="Kolonay J.F."/>
            <person name="Smit J."/>
            <person name="Craven M.B."/>
            <person name="Khouri H.M."/>
            <person name="Shetty J."/>
            <person name="Berry K.J."/>
            <person name="Utterback T.R."/>
            <person name="Tran K."/>
            <person name="Wolf A.M."/>
            <person name="Vamathevan J.J."/>
            <person name="Ermolaeva M.D."/>
            <person name="White O."/>
            <person name="Salzberg S.L."/>
            <person name="Venter J.C."/>
            <person name="Shapiro L."/>
            <person name="Fraser C.M."/>
        </authorList>
    </citation>
    <scope>NUCLEOTIDE SEQUENCE [LARGE SCALE GENOMIC DNA]</scope>
    <source>
        <strain>ATCC 19089 / CIP 103742 / CB 15</strain>
    </source>
</reference>
<protein>
    <recommendedName>
        <fullName evidence="1">Nucleoside diphosphate kinase</fullName>
        <shortName evidence="1">NDK</shortName>
        <shortName evidence="1">NDP kinase</shortName>
        <ecNumber evidence="1">2.7.4.6</ecNumber>
    </recommendedName>
    <alternativeName>
        <fullName evidence="1">Nucleoside-2-P kinase</fullName>
    </alternativeName>
</protein>
<sequence length="139" mass="15250">MTERTFSIIKPDATRRNLTGAINAVIEAAGLRIVAQRRVKLTEAQAKKFYEVHAERPFYGELVGQMTAEPVVVQVLQGDNAVLKYREVMGATNPENADEGTIRKLFALSIGENSVHGSDSLENAGIEIAQFFTEDEIVG</sequence>
<organism>
    <name type="scientific">Caulobacter vibrioides (strain ATCC 19089 / CIP 103742 / CB 15)</name>
    <name type="common">Caulobacter crescentus</name>
    <dbReference type="NCBI Taxonomy" id="190650"/>
    <lineage>
        <taxon>Bacteria</taxon>
        <taxon>Pseudomonadati</taxon>
        <taxon>Pseudomonadota</taxon>
        <taxon>Alphaproteobacteria</taxon>
        <taxon>Caulobacterales</taxon>
        <taxon>Caulobacteraceae</taxon>
        <taxon>Caulobacter</taxon>
    </lineage>
</organism>
<accession>Q9A7M2</accession>
<name>NDK_CAUVC</name>
<dbReference type="EC" id="2.7.4.6" evidence="1"/>
<dbReference type="EMBL" id="AE005673">
    <property type="protein sequence ID" value="AAK23676.1"/>
    <property type="molecule type" value="Genomic_DNA"/>
</dbReference>
<dbReference type="PIR" id="H87459">
    <property type="entry name" value="H87459"/>
</dbReference>
<dbReference type="RefSeq" id="NP_420508.1">
    <property type="nucleotide sequence ID" value="NC_002696.2"/>
</dbReference>
<dbReference type="RefSeq" id="WP_010919569.1">
    <property type="nucleotide sequence ID" value="NC_002696.2"/>
</dbReference>
<dbReference type="SMR" id="Q9A7M2"/>
<dbReference type="STRING" id="190650.CC_1699"/>
<dbReference type="EnsemblBacteria" id="AAK23676">
    <property type="protein sequence ID" value="AAK23676"/>
    <property type="gene ID" value="CC_1699"/>
</dbReference>
<dbReference type="KEGG" id="ccr:CC_1699"/>
<dbReference type="PATRIC" id="fig|190650.5.peg.1727"/>
<dbReference type="eggNOG" id="COG0105">
    <property type="taxonomic scope" value="Bacteria"/>
</dbReference>
<dbReference type="HOGENOM" id="CLU_060216_8_1_5"/>
<dbReference type="BioCyc" id="CAULO:CC1699-MONOMER"/>
<dbReference type="Proteomes" id="UP000001816">
    <property type="component" value="Chromosome"/>
</dbReference>
<dbReference type="GO" id="GO:0005737">
    <property type="term" value="C:cytoplasm"/>
    <property type="evidence" value="ECO:0007669"/>
    <property type="project" value="UniProtKB-SubCell"/>
</dbReference>
<dbReference type="GO" id="GO:0005524">
    <property type="term" value="F:ATP binding"/>
    <property type="evidence" value="ECO:0007669"/>
    <property type="project" value="UniProtKB-UniRule"/>
</dbReference>
<dbReference type="GO" id="GO:0046872">
    <property type="term" value="F:metal ion binding"/>
    <property type="evidence" value="ECO:0007669"/>
    <property type="project" value="UniProtKB-KW"/>
</dbReference>
<dbReference type="GO" id="GO:0004550">
    <property type="term" value="F:nucleoside diphosphate kinase activity"/>
    <property type="evidence" value="ECO:0007669"/>
    <property type="project" value="UniProtKB-UniRule"/>
</dbReference>
<dbReference type="GO" id="GO:0006241">
    <property type="term" value="P:CTP biosynthetic process"/>
    <property type="evidence" value="ECO:0007669"/>
    <property type="project" value="UniProtKB-UniRule"/>
</dbReference>
<dbReference type="GO" id="GO:0006183">
    <property type="term" value="P:GTP biosynthetic process"/>
    <property type="evidence" value="ECO:0007669"/>
    <property type="project" value="UniProtKB-UniRule"/>
</dbReference>
<dbReference type="GO" id="GO:0006228">
    <property type="term" value="P:UTP biosynthetic process"/>
    <property type="evidence" value="ECO:0007669"/>
    <property type="project" value="UniProtKB-UniRule"/>
</dbReference>
<dbReference type="CDD" id="cd04413">
    <property type="entry name" value="NDPk_I"/>
    <property type="match status" value="1"/>
</dbReference>
<dbReference type="FunFam" id="3.30.70.141:FF:000017">
    <property type="entry name" value="Nucleoside diphosphate kinase"/>
    <property type="match status" value="1"/>
</dbReference>
<dbReference type="Gene3D" id="3.30.70.141">
    <property type="entry name" value="Nucleoside diphosphate kinase-like domain"/>
    <property type="match status" value="1"/>
</dbReference>
<dbReference type="HAMAP" id="MF_00451">
    <property type="entry name" value="NDP_kinase"/>
    <property type="match status" value="1"/>
</dbReference>
<dbReference type="InterPro" id="IPR034907">
    <property type="entry name" value="NDK-like_dom"/>
</dbReference>
<dbReference type="InterPro" id="IPR036850">
    <property type="entry name" value="NDK-like_dom_sf"/>
</dbReference>
<dbReference type="InterPro" id="IPR001564">
    <property type="entry name" value="Nucleoside_diP_kinase"/>
</dbReference>
<dbReference type="InterPro" id="IPR023005">
    <property type="entry name" value="Nucleoside_diP_kinase_AS"/>
</dbReference>
<dbReference type="NCBIfam" id="NF001908">
    <property type="entry name" value="PRK00668.1"/>
    <property type="match status" value="1"/>
</dbReference>
<dbReference type="PANTHER" id="PTHR46161">
    <property type="entry name" value="NUCLEOSIDE DIPHOSPHATE KINASE"/>
    <property type="match status" value="1"/>
</dbReference>
<dbReference type="PANTHER" id="PTHR46161:SF3">
    <property type="entry name" value="NUCLEOSIDE DIPHOSPHATE KINASE DDB_G0292928-RELATED"/>
    <property type="match status" value="1"/>
</dbReference>
<dbReference type="Pfam" id="PF00334">
    <property type="entry name" value="NDK"/>
    <property type="match status" value="1"/>
</dbReference>
<dbReference type="PRINTS" id="PR01243">
    <property type="entry name" value="NUCDPKINASE"/>
</dbReference>
<dbReference type="SMART" id="SM00562">
    <property type="entry name" value="NDK"/>
    <property type="match status" value="1"/>
</dbReference>
<dbReference type="SUPFAM" id="SSF54919">
    <property type="entry name" value="Nucleoside diphosphate kinase, NDK"/>
    <property type="match status" value="1"/>
</dbReference>
<dbReference type="PROSITE" id="PS00469">
    <property type="entry name" value="NDPK"/>
    <property type="match status" value="1"/>
</dbReference>
<dbReference type="PROSITE" id="PS51374">
    <property type="entry name" value="NDPK_LIKE"/>
    <property type="match status" value="1"/>
</dbReference>
<evidence type="ECO:0000255" key="1">
    <source>
        <dbReference type="HAMAP-Rule" id="MF_00451"/>
    </source>
</evidence>
<comment type="function">
    <text evidence="1">Major role in the synthesis of nucleoside triphosphates other than ATP. The ATP gamma phosphate is transferred to the NDP beta phosphate via a ping-pong mechanism, using a phosphorylated active-site intermediate.</text>
</comment>
<comment type="catalytic activity">
    <reaction evidence="1">
        <text>a 2'-deoxyribonucleoside 5'-diphosphate + ATP = a 2'-deoxyribonucleoside 5'-triphosphate + ADP</text>
        <dbReference type="Rhea" id="RHEA:44640"/>
        <dbReference type="ChEBI" id="CHEBI:30616"/>
        <dbReference type="ChEBI" id="CHEBI:61560"/>
        <dbReference type="ChEBI" id="CHEBI:73316"/>
        <dbReference type="ChEBI" id="CHEBI:456216"/>
        <dbReference type="EC" id="2.7.4.6"/>
    </reaction>
</comment>
<comment type="catalytic activity">
    <reaction evidence="1">
        <text>a ribonucleoside 5'-diphosphate + ATP = a ribonucleoside 5'-triphosphate + ADP</text>
        <dbReference type="Rhea" id="RHEA:18113"/>
        <dbReference type="ChEBI" id="CHEBI:30616"/>
        <dbReference type="ChEBI" id="CHEBI:57930"/>
        <dbReference type="ChEBI" id="CHEBI:61557"/>
        <dbReference type="ChEBI" id="CHEBI:456216"/>
        <dbReference type="EC" id="2.7.4.6"/>
    </reaction>
</comment>
<comment type="cofactor">
    <cofactor evidence="1">
        <name>Mg(2+)</name>
        <dbReference type="ChEBI" id="CHEBI:18420"/>
    </cofactor>
</comment>
<comment type="subunit">
    <text evidence="1">Homotetramer.</text>
</comment>
<comment type="subcellular location">
    <subcellularLocation>
        <location evidence="1">Cytoplasm</location>
    </subcellularLocation>
</comment>
<comment type="similarity">
    <text evidence="1">Belongs to the NDK family.</text>
</comment>
<feature type="chain" id="PRO_0000136962" description="Nucleoside diphosphate kinase">
    <location>
        <begin position="1"/>
        <end position="139"/>
    </location>
</feature>
<feature type="active site" description="Pros-phosphohistidine intermediate" evidence="1">
    <location>
        <position position="116"/>
    </location>
</feature>
<feature type="binding site" evidence="1">
    <location>
        <position position="10"/>
    </location>
    <ligand>
        <name>ATP</name>
        <dbReference type="ChEBI" id="CHEBI:30616"/>
    </ligand>
</feature>
<feature type="binding site" evidence="1">
    <location>
        <position position="58"/>
    </location>
    <ligand>
        <name>ATP</name>
        <dbReference type="ChEBI" id="CHEBI:30616"/>
    </ligand>
</feature>
<feature type="binding site" evidence="1">
    <location>
        <position position="86"/>
    </location>
    <ligand>
        <name>ATP</name>
        <dbReference type="ChEBI" id="CHEBI:30616"/>
    </ligand>
</feature>
<feature type="binding site" evidence="1">
    <location>
        <position position="92"/>
    </location>
    <ligand>
        <name>ATP</name>
        <dbReference type="ChEBI" id="CHEBI:30616"/>
    </ligand>
</feature>
<feature type="binding site" evidence="1">
    <location>
        <position position="103"/>
    </location>
    <ligand>
        <name>ATP</name>
        <dbReference type="ChEBI" id="CHEBI:30616"/>
    </ligand>
</feature>
<feature type="binding site" evidence="1">
    <location>
        <position position="113"/>
    </location>
    <ligand>
        <name>ATP</name>
        <dbReference type="ChEBI" id="CHEBI:30616"/>
    </ligand>
</feature>
<gene>
    <name evidence="1" type="primary">ndk</name>
    <name type="ordered locus">CC_1699</name>
</gene>
<keyword id="KW-0067">ATP-binding</keyword>
<keyword id="KW-0963">Cytoplasm</keyword>
<keyword id="KW-0418">Kinase</keyword>
<keyword id="KW-0460">Magnesium</keyword>
<keyword id="KW-0479">Metal-binding</keyword>
<keyword id="KW-0546">Nucleotide metabolism</keyword>
<keyword id="KW-0547">Nucleotide-binding</keyword>
<keyword id="KW-0597">Phosphoprotein</keyword>
<keyword id="KW-1185">Reference proteome</keyword>
<keyword id="KW-0808">Transferase</keyword>